<proteinExistence type="inferred from homology"/>
<sequence>MAAAKWLIASLAFASSGLAFTPEDFISAPRRGEAIPDPKGELAVFHVSKYNFDKKDRPSGWNLLNLKNGDISVLTTDSDISEITWLGDGTKIVYVNGTDSVKGGVGIWISDAKNFGNAYKAGSVNGAFSGLKLAKSGDKINFVGYGQSTTKGDLYNEAAAKEAVSSARIYDSLFVRHWDTYVGTQFNAVFSGALTKSGDKYSFDGKLKNLVHPVKYAESPYPPFGGSGDYDLSSDGKTVAFMSKAPELPKANLTTTYIFVVPHDGSRVAEPINKRNGPRTPQGIEGASSSPVFSPDGKRIAYLQMATKNYESDRRVIHIAEVGSNKPVQRIASNWDRSPEVVKWSSDGRTLYVTAEDHATGKLFTLPADARDSHKPAVVKHDGSVSSFYFVGSSKSVLISGNSLWSNALFQVATPGRPNRKLFYANEHDPELKGLGPNDIEPLWVDGARTKIHSWIVKPTGFDKNKVYPLAFLIHGGPQGSWGDSWSTRWNPRVWADQGYVVVAPNPTGSTGFGQKLTDDITNDWGGAPYKDLVKIWEHVRDHIKYIDTDNGIAAGASFGGFMVNWIQGHDLGRKFKALVSHDGTFVGSSKIGTDELFFIEHDFNGTFFEARQNYDRWDCSKPELVAKWSTPQLVIHNDFDFRLSVAEGVGLFNVLQEKGIPSRFLNFPDETHWVTKPENSLVWHQQVLGWINKWSGINKSNPKSIKLSDCPIEVVDHEAHSYFDY</sequence>
<organism>
    <name type="scientific">Trichophyton tonsurans</name>
    <name type="common">Scalp ringworm fungus</name>
    <dbReference type="NCBI Taxonomy" id="34387"/>
    <lineage>
        <taxon>Eukaryota</taxon>
        <taxon>Fungi</taxon>
        <taxon>Dikarya</taxon>
        <taxon>Ascomycota</taxon>
        <taxon>Pezizomycotina</taxon>
        <taxon>Eurotiomycetes</taxon>
        <taxon>Eurotiomycetidae</taxon>
        <taxon>Onygenales</taxon>
        <taxon>Arthrodermataceae</taxon>
        <taxon>Trichophyton</taxon>
    </lineage>
</organism>
<dbReference type="EC" id="3.4.14.-"/>
<dbReference type="EMBL" id="FJ267692">
    <property type="protein sequence ID" value="ACJ06660.1"/>
    <property type="molecule type" value="Genomic_DNA"/>
</dbReference>
<dbReference type="SMR" id="B6V869"/>
<dbReference type="Allergome" id="655">
    <property type="allergen name" value="Tri t 4"/>
</dbReference>
<dbReference type="ESTHER" id="artbe-DPP5">
    <property type="family name" value="Prolyl_oligopeptidase_S9"/>
</dbReference>
<dbReference type="MEROPS" id="S09.012"/>
<dbReference type="GlyCosmos" id="B6V869">
    <property type="glycosylation" value="4 sites, No reported glycans"/>
</dbReference>
<dbReference type="VEuPathDB" id="FungiDB:TESG_00772"/>
<dbReference type="GO" id="GO:0005576">
    <property type="term" value="C:extracellular region"/>
    <property type="evidence" value="ECO:0007669"/>
    <property type="project" value="UniProtKB-SubCell"/>
</dbReference>
<dbReference type="GO" id="GO:0004177">
    <property type="term" value="F:aminopeptidase activity"/>
    <property type="evidence" value="ECO:0007669"/>
    <property type="project" value="UniProtKB-KW"/>
</dbReference>
<dbReference type="GO" id="GO:0004252">
    <property type="term" value="F:serine-type endopeptidase activity"/>
    <property type="evidence" value="ECO:0007669"/>
    <property type="project" value="TreeGrafter"/>
</dbReference>
<dbReference type="GO" id="GO:0006508">
    <property type="term" value="P:proteolysis"/>
    <property type="evidence" value="ECO:0007669"/>
    <property type="project" value="UniProtKB-KW"/>
</dbReference>
<dbReference type="FunFam" id="3.40.50.1820:FF:000028">
    <property type="entry name" value="S9 family peptidase"/>
    <property type="match status" value="1"/>
</dbReference>
<dbReference type="Gene3D" id="3.40.50.1820">
    <property type="entry name" value="alpha/beta hydrolase"/>
    <property type="match status" value="1"/>
</dbReference>
<dbReference type="Gene3D" id="2.120.10.30">
    <property type="entry name" value="TolB, C-terminal domain"/>
    <property type="match status" value="1"/>
</dbReference>
<dbReference type="InterPro" id="IPR011042">
    <property type="entry name" value="6-blade_b-propeller_TolB-like"/>
</dbReference>
<dbReference type="InterPro" id="IPR029058">
    <property type="entry name" value="AB_hydrolase_fold"/>
</dbReference>
<dbReference type="InterPro" id="IPR011659">
    <property type="entry name" value="PD40"/>
</dbReference>
<dbReference type="InterPro" id="IPR001375">
    <property type="entry name" value="Peptidase_S9_cat"/>
</dbReference>
<dbReference type="PANTHER" id="PTHR42776:SF11">
    <property type="entry name" value="DIPEPTIDYL-PEPTIDASE 5-RELATED"/>
    <property type="match status" value="1"/>
</dbReference>
<dbReference type="PANTHER" id="PTHR42776">
    <property type="entry name" value="SERINE PEPTIDASE S9 FAMILY MEMBER"/>
    <property type="match status" value="1"/>
</dbReference>
<dbReference type="Pfam" id="PF07676">
    <property type="entry name" value="PD40"/>
    <property type="match status" value="1"/>
</dbReference>
<dbReference type="Pfam" id="PF00326">
    <property type="entry name" value="Peptidase_S9"/>
    <property type="match status" value="1"/>
</dbReference>
<dbReference type="SUPFAM" id="SSF53474">
    <property type="entry name" value="alpha/beta-Hydrolases"/>
    <property type="match status" value="1"/>
</dbReference>
<dbReference type="SUPFAM" id="SSF82171">
    <property type="entry name" value="DPP6 N-terminal domain-like"/>
    <property type="match status" value="1"/>
</dbReference>
<keyword id="KW-0031">Aminopeptidase</keyword>
<keyword id="KW-0325">Glycoprotein</keyword>
<keyword id="KW-0378">Hydrolase</keyword>
<keyword id="KW-0645">Protease</keyword>
<keyword id="KW-0964">Secreted</keyword>
<keyword id="KW-0720">Serine protease</keyword>
<keyword id="KW-0732">Signal</keyword>
<keyword id="KW-0843">Virulence</keyword>
<reference key="1">
    <citation type="submission" date="2008-10" db="EMBL/GenBank/DDBJ databases">
        <title>Comparing putative pathogenicity factors between Trichophyton tonsurans and Trichophyton equinum.</title>
        <authorList>
            <person name="Preuett B.L."/>
            <person name="Abdel-Rahman S.M."/>
        </authorList>
    </citation>
    <scope>NUCLEOTIDE SEQUENCE [GENOMIC DNA]</scope>
</reference>
<accession>B6V869</accession>
<evidence type="ECO:0000250" key="1"/>
<evidence type="ECO:0000255" key="2"/>
<evidence type="ECO:0000256" key="3">
    <source>
        <dbReference type="SAM" id="MobiDB-lite"/>
    </source>
</evidence>
<evidence type="ECO:0000305" key="4"/>
<feature type="signal peptide" evidence="2">
    <location>
        <begin position="1"/>
        <end position="19"/>
    </location>
</feature>
<feature type="chain" id="PRO_0000384093" description="Dipeptidyl-peptidase 5">
    <location>
        <begin position="20"/>
        <end position="726"/>
    </location>
</feature>
<feature type="region of interest" description="Disordered" evidence="3">
    <location>
        <begin position="269"/>
        <end position="291"/>
    </location>
</feature>
<feature type="active site" description="Charge relay system" evidence="1">
    <location>
        <position position="558"/>
    </location>
</feature>
<feature type="active site" description="Charge relay system" evidence="1">
    <location>
        <position position="641"/>
    </location>
</feature>
<feature type="active site" description="Charge relay system" evidence="1">
    <location>
        <position position="673"/>
    </location>
</feature>
<feature type="glycosylation site" description="N-linked (GlcNAc...) asparagine" evidence="2">
    <location>
        <position position="96"/>
    </location>
</feature>
<feature type="glycosylation site" description="N-linked (GlcNAc...) asparagine" evidence="2">
    <location>
        <position position="252"/>
    </location>
</feature>
<feature type="glycosylation site" description="N-linked (GlcNAc...) asparagine" evidence="2">
    <location>
        <position position="605"/>
    </location>
</feature>
<feature type="glycosylation site" description="N-linked (GlcNAc...) asparagine" evidence="2">
    <location>
        <position position="699"/>
    </location>
</feature>
<gene>
    <name type="primary">DPP5</name>
</gene>
<comment type="function">
    <text evidence="1">Extracellular dipeptidyl-peptidase which removes N-terminal dipeptides sequentially from polypeptides having unsubstituted N-termini. Contributes to pathogenicity (By similarity).</text>
</comment>
<comment type="subcellular location">
    <subcellularLocation>
        <location evidence="1">Secreted</location>
    </subcellularLocation>
</comment>
<comment type="similarity">
    <text evidence="4">Belongs to the peptidase S9C family.</text>
</comment>
<name>DPP5_TRITO</name>
<protein>
    <recommendedName>
        <fullName>Dipeptidyl-peptidase 5</fullName>
        <ecNumber>3.4.14.-</ecNumber>
    </recommendedName>
    <alternativeName>
        <fullName>Dipeptidyl-peptidase V</fullName>
        <shortName>DPP V</shortName>
        <shortName>DppV</shortName>
    </alternativeName>
</protein>